<sequence>MELLTFRDVAIEFSPEEWKCLDPDQQNLYRDVMLENYRNLVSLGVAISNPDLVTCLEQRKEPYNVKIHKIVARPPAMCSHFTQDHWPVQGIEDSFHKLILRRYEKCGHDNLQLRKGCKSLNECKLQKGGYNEFNECLSTTQSKILQCKASVKVVSKFSNSNKRKTRHTGEKHFKECGKSFQKFSHLTQHKVIHAGEKPYTCEECGKAFKWSLIFNEHKRIHTGEKPFTCEECGSIFTTSSHFAKHKIIHTGEKPYKCEECGKAFNRFTTLTKHKRIHAGEKPITCEECRKIFTSSSNFAKHKRIHTGEKPYKCEECGKAFNRSTTLTKHKRIHTGEKPYTCEECGKAFRQSSKLNEHKKVHTGERPYKCDECGKAFGRSRVLNEHKKIHTGEKPYKCEECGKAFRRSTDRSQHKKIHSADKPYKCKECDKAFKQFSLLSQHKKIHTVDKPYKCKDCDKAFKRFSHLNKHKKIHT</sequence>
<name>ZN141_HUMAN</name>
<protein>
    <recommendedName>
        <fullName>Zinc finger protein 141</fullName>
    </recommendedName>
</protein>
<keyword id="KW-0217">Developmental protein</keyword>
<keyword id="KW-0225">Disease variant</keyword>
<keyword id="KW-0238">DNA-binding</keyword>
<keyword id="KW-0479">Metal-binding</keyword>
<keyword id="KW-0539">Nucleus</keyword>
<keyword id="KW-1267">Proteomics identification</keyword>
<keyword id="KW-1185">Reference proteome</keyword>
<keyword id="KW-0677">Repeat</keyword>
<keyword id="KW-0678">Repressor</keyword>
<keyword id="KW-0804">Transcription</keyword>
<keyword id="KW-0805">Transcription regulation</keyword>
<keyword id="KW-0862">Zinc</keyword>
<keyword id="KW-0863">Zinc-finger</keyword>
<organism>
    <name type="scientific">Homo sapiens</name>
    <name type="common">Human</name>
    <dbReference type="NCBI Taxonomy" id="9606"/>
    <lineage>
        <taxon>Eukaryota</taxon>
        <taxon>Metazoa</taxon>
        <taxon>Chordata</taxon>
        <taxon>Craniata</taxon>
        <taxon>Vertebrata</taxon>
        <taxon>Euteleostomi</taxon>
        <taxon>Mammalia</taxon>
        <taxon>Eutheria</taxon>
        <taxon>Euarchontoglires</taxon>
        <taxon>Primates</taxon>
        <taxon>Haplorrhini</taxon>
        <taxon>Catarrhini</taxon>
        <taxon>Hominidae</taxon>
        <taxon>Homo</taxon>
    </lineage>
</organism>
<feature type="chain" id="PRO_0000047424" description="Zinc finger protein 141">
    <location>
        <begin position="1"/>
        <end position="474"/>
    </location>
</feature>
<feature type="domain" description="KRAB" evidence="2">
    <location>
        <begin position="4"/>
        <end position="75"/>
    </location>
</feature>
<feature type="zinc finger region" description="C2H2-type 1; atypical" evidence="1">
    <location>
        <begin position="171"/>
        <end position="193"/>
    </location>
</feature>
<feature type="zinc finger region" description="C2H2-type 2" evidence="1">
    <location>
        <begin position="199"/>
        <end position="221"/>
    </location>
</feature>
<feature type="zinc finger region" description="C2H2-type 3" evidence="1">
    <location>
        <begin position="227"/>
        <end position="249"/>
    </location>
</feature>
<feature type="zinc finger region" description="C2H2-type 4" evidence="1">
    <location>
        <begin position="255"/>
        <end position="277"/>
    </location>
</feature>
<feature type="zinc finger region" description="C2H2-type 5" evidence="1">
    <location>
        <begin position="283"/>
        <end position="305"/>
    </location>
</feature>
<feature type="zinc finger region" description="C2H2-type 6" evidence="1">
    <location>
        <begin position="311"/>
        <end position="333"/>
    </location>
</feature>
<feature type="zinc finger region" description="C2H2-type 7" evidence="1">
    <location>
        <begin position="339"/>
        <end position="361"/>
    </location>
</feature>
<feature type="zinc finger region" description="C2H2-type 8" evidence="1">
    <location>
        <begin position="367"/>
        <end position="389"/>
    </location>
</feature>
<feature type="zinc finger region" description="C2H2-type 9" evidence="1">
    <location>
        <begin position="395"/>
        <end position="417"/>
    </location>
</feature>
<feature type="zinc finger region" description="C2H2-type 10" evidence="1">
    <location>
        <begin position="423"/>
        <end position="445"/>
    </location>
</feature>
<feature type="zinc finger region" description="C2H2-type 11" evidence="1">
    <location>
        <begin position="451"/>
        <end position="473"/>
    </location>
</feature>
<feature type="sequence variant" id="VAR_019973" description="In dbSNP:rs2229296.">
    <original>K</original>
    <variation>E</variation>
    <location>
        <position position="124"/>
    </location>
</feature>
<feature type="sequence variant" id="VAR_012026" description="In dbSNP:rs955417.">
    <original>R</original>
    <variation>K</variation>
    <location>
        <position position="349"/>
    </location>
</feature>
<feature type="sequence variant" id="VAR_012027" description="In dbSNP:rs2018645.">
    <original>K</original>
    <variation>N</variation>
    <location>
        <position position="358"/>
    </location>
</feature>
<feature type="sequence variant" id="VAR_069637" description="In PAPA6; dbSNP:rs587776959." evidence="3">
    <original>T</original>
    <variation>I</variation>
    <location>
        <position position="474"/>
    </location>
</feature>
<accession>Q15928</accession>
<accession>Q6DK07</accession>
<proteinExistence type="evidence at protein level"/>
<reference key="1">
    <citation type="journal article" date="1993" name="Hum. Mol. Genet.">
        <title>A zinc-finger gene ZNF141 mapping at 4p16.3/D4S90 is a candidate gene for the Wolf-Hirschhorn (4p-) syndrome.</title>
        <authorList>
            <person name="Tommerup N."/>
            <person name="Aagaard L."/>
            <person name="Lund C.L."/>
            <person name="Boel E."/>
            <person name="Baxendale S."/>
            <person name="Bates G.P."/>
            <person name="Lehrach H."/>
            <person name="Vissing H."/>
        </authorList>
    </citation>
    <scope>NUCLEOTIDE SEQUENCE [MRNA]</scope>
    <source>
        <tissue>Insulinoma</tissue>
    </source>
</reference>
<reference key="2">
    <citation type="journal article" date="2004" name="Genome Res.">
        <title>The status, quality, and expansion of the NIH full-length cDNA project: the Mammalian Gene Collection (MGC).</title>
        <authorList>
            <consortium name="The MGC Project Team"/>
        </authorList>
    </citation>
    <scope>NUCLEOTIDE SEQUENCE [LARGE SCALE MRNA]</scope>
</reference>
<reference key="3">
    <citation type="journal article" date="2013" name="J. Med. Genet.">
        <title>Whole exome sequencing identified a novel zinc-finger gene ZNF141 associated with autosomal recessive postaxial polydactyly type A.</title>
        <authorList>
            <person name="Kalsoom U.E."/>
            <person name="Klopocki E."/>
            <person name="Wasif N."/>
            <person name="Tariq M."/>
            <person name="Khan S."/>
            <person name="Hecht J."/>
            <person name="Krawitz P."/>
            <person name="Mundlos S."/>
            <person name="Ahmad W."/>
        </authorList>
    </citation>
    <scope>FUNCTION</scope>
    <scope>VARIANT PAPA6 ILE-474</scope>
</reference>
<dbReference type="EMBL" id="L15309">
    <property type="protein sequence ID" value="AAC37529.1"/>
    <property type="molecule type" value="mRNA"/>
</dbReference>
<dbReference type="EMBL" id="BC074853">
    <property type="protein sequence ID" value="AAH74853.3"/>
    <property type="molecule type" value="mRNA"/>
</dbReference>
<dbReference type="CCDS" id="CCDS33931.1"/>
<dbReference type="PIR" id="I54338">
    <property type="entry name" value="I54338"/>
</dbReference>
<dbReference type="RefSeq" id="NP_003432.1">
    <property type="nucleotide sequence ID" value="NM_003441.4"/>
</dbReference>
<dbReference type="SMR" id="Q15928"/>
<dbReference type="BioGRID" id="113494">
    <property type="interactions" value="2"/>
</dbReference>
<dbReference type="FunCoup" id="Q15928">
    <property type="interactions" value="16"/>
</dbReference>
<dbReference type="STRING" id="9606.ENSP00000240499"/>
<dbReference type="iPTMnet" id="Q15928"/>
<dbReference type="PhosphoSitePlus" id="Q15928"/>
<dbReference type="BioMuta" id="ZNF141"/>
<dbReference type="DMDM" id="2501717"/>
<dbReference type="jPOST" id="Q15928"/>
<dbReference type="MassIVE" id="Q15928"/>
<dbReference type="PaxDb" id="9606-ENSP00000240499"/>
<dbReference type="PeptideAtlas" id="Q15928"/>
<dbReference type="ProteomicsDB" id="60818"/>
<dbReference type="Pumba" id="Q15928"/>
<dbReference type="Antibodypedia" id="7954">
    <property type="antibodies" value="55 antibodies from 13 providers"/>
</dbReference>
<dbReference type="DNASU" id="7700"/>
<dbReference type="Ensembl" id="ENST00000240499.8">
    <property type="protein sequence ID" value="ENSP00000240499.7"/>
    <property type="gene ID" value="ENSG00000131127.14"/>
</dbReference>
<dbReference type="GeneID" id="7700"/>
<dbReference type="KEGG" id="hsa:7700"/>
<dbReference type="MANE-Select" id="ENST00000240499.8">
    <property type="protein sequence ID" value="ENSP00000240499.7"/>
    <property type="RefSeq nucleotide sequence ID" value="NM_003441.4"/>
    <property type="RefSeq protein sequence ID" value="NP_003432.1"/>
</dbReference>
<dbReference type="UCSC" id="uc003gaa.3">
    <property type="organism name" value="human"/>
</dbReference>
<dbReference type="AGR" id="HGNC:12926"/>
<dbReference type="CTD" id="7700"/>
<dbReference type="DisGeNET" id="7700"/>
<dbReference type="GeneCards" id="ZNF141"/>
<dbReference type="HGNC" id="HGNC:12926">
    <property type="gene designation" value="ZNF141"/>
</dbReference>
<dbReference type="HPA" id="ENSG00000131127">
    <property type="expression patterns" value="Low tissue specificity"/>
</dbReference>
<dbReference type="MalaCards" id="ZNF141"/>
<dbReference type="MIM" id="194648">
    <property type="type" value="gene"/>
</dbReference>
<dbReference type="MIM" id="615226">
    <property type="type" value="phenotype"/>
</dbReference>
<dbReference type="neXtProt" id="NX_Q15928"/>
<dbReference type="OpenTargets" id="ENSG00000131127"/>
<dbReference type="Orphanet" id="93334">
    <property type="disease" value="Postaxial polydactyly type A"/>
</dbReference>
<dbReference type="PharmGKB" id="PA37513"/>
<dbReference type="VEuPathDB" id="HostDB:ENSG00000131127"/>
<dbReference type="eggNOG" id="KOG1721">
    <property type="taxonomic scope" value="Eukaryota"/>
</dbReference>
<dbReference type="GeneTree" id="ENSGT00940000161765"/>
<dbReference type="HOGENOM" id="CLU_002678_44_0_1"/>
<dbReference type="InParanoid" id="Q15928"/>
<dbReference type="OMA" id="LITHKEX"/>
<dbReference type="OrthoDB" id="654211at2759"/>
<dbReference type="PAN-GO" id="Q15928">
    <property type="GO annotations" value="3 GO annotations based on evolutionary models"/>
</dbReference>
<dbReference type="PhylomeDB" id="Q15928"/>
<dbReference type="TreeFam" id="TF342117"/>
<dbReference type="PathwayCommons" id="Q15928"/>
<dbReference type="Reactome" id="R-HSA-212436">
    <property type="pathway name" value="Generic Transcription Pathway"/>
</dbReference>
<dbReference type="Reactome" id="R-HSA-9843940">
    <property type="pathway name" value="Regulation of endogenous retroelements by KRAB-ZFP proteins"/>
</dbReference>
<dbReference type="BioGRID-ORCS" id="7700">
    <property type="hits" value="104 hits in 1129 CRISPR screens"/>
</dbReference>
<dbReference type="ChiTaRS" id="ZNF141">
    <property type="organism name" value="human"/>
</dbReference>
<dbReference type="GenomeRNAi" id="7700"/>
<dbReference type="Pharos" id="Q15928">
    <property type="development level" value="Tbio"/>
</dbReference>
<dbReference type="PRO" id="PR:Q15928"/>
<dbReference type="Proteomes" id="UP000005640">
    <property type="component" value="Chromosome 4"/>
</dbReference>
<dbReference type="RNAct" id="Q15928">
    <property type="molecule type" value="protein"/>
</dbReference>
<dbReference type="Bgee" id="ENSG00000131127">
    <property type="expression patterns" value="Expressed in calcaneal tendon and 129 other cell types or tissues"/>
</dbReference>
<dbReference type="ExpressionAtlas" id="Q15928">
    <property type="expression patterns" value="baseline and differential"/>
</dbReference>
<dbReference type="GO" id="GO:0005634">
    <property type="term" value="C:nucleus"/>
    <property type="evidence" value="ECO:0007669"/>
    <property type="project" value="UniProtKB-SubCell"/>
</dbReference>
<dbReference type="GO" id="GO:0000981">
    <property type="term" value="F:DNA-binding transcription factor activity, RNA polymerase II-specific"/>
    <property type="evidence" value="ECO:0000318"/>
    <property type="project" value="GO_Central"/>
</dbReference>
<dbReference type="GO" id="GO:0000978">
    <property type="term" value="F:RNA polymerase II cis-regulatory region sequence-specific DNA binding"/>
    <property type="evidence" value="ECO:0000318"/>
    <property type="project" value="GO_Central"/>
</dbReference>
<dbReference type="GO" id="GO:0008270">
    <property type="term" value="F:zinc ion binding"/>
    <property type="evidence" value="ECO:0007669"/>
    <property type="project" value="UniProtKB-KW"/>
</dbReference>
<dbReference type="GO" id="GO:0009653">
    <property type="term" value="P:anatomical structure morphogenesis"/>
    <property type="evidence" value="ECO:0000304"/>
    <property type="project" value="ProtInc"/>
</dbReference>
<dbReference type="GO" id="GO:0035108">
    <property type="term" value="P:limb morphogenesis"/>
    <property type="evidence" value="ECO:0000315"/>
    <property type="project" value="UniProtKB"/>
</dbReference>
<dbReference type="GO" id="GO:0000122">
    <property type="term" value="P:negative regulation of transcription by RNA polymerase II"/>
    <property type="evidence" value="ECO:0000314"/>
    <property type="project" value="ARUK-UCL"/>
</dbReference>
<dbReference type="GO" id="GO:0006355">
    <property type="term" value="P:regulation of DNA-templated transcription"/>
    <property type="evidence" value="ECO:0000318"/>
    <property type="project" value="GO_Central"/>
</dbReference>
<dbReference type="GO" id="GO:0006366">
    <property type="term" value="P:transcription by RNA polymerase II"/>
    <property type="evidence" value="ECO:0000304"/>
    <property type="project" value="ProtInc"/>
</dbReference>
<dbReference type="CDD" id="cd07765">
    <property type="entry name" value="KRAB_A-box"/>
    <property type="match status" value="1"/>
</dbReference>
<dbReference type="FunFam" id="3.30.160.60:FF:002472">
    <property type="match status" value="1"/>
</dbReference>
<dbReference type="FunFam" id="3.30.160.60:FF:001737">
    <property type="entry name" value="Zinc finger protein 100"/>
    <property type="match status" value="1"/>
</dbReference>
<dbReference type="FunFam" id="3.30.160.60:FF:000524">
    <property type="entry name" value="Zinc finger protein 155"/>
    <property type="match status" value="2"/>
</dbReference>
<dbReference type="FunFam" id="3.30.160.60:FF:000034">
    <property type="entry name" value="zinc finger protein 25"/>
    <property type="match status" value="1"/>
</dbReference>
<dbReference type="FunFam" id="3.30.160.60:FF:001868">
    <property type="entry name" value="Zinc finger protein 264"/>
    <property type="match status" value="1"/>
</dbReference>
<dbReference type="FunFam" id="3.30.160.60:FF:002343">
    <property type="entry name" value="Zinc finger protein 33A"/>
    <property type="match status" value="1"/>
</dbReference>
<dbReference type="FunFam" id="3.30.160.60:FF:000690">
    <property type="entry name" value="Zinc finger protein 354C"/>
    <property type="match status" value="1"/>
</dbReference>
<dbReference type="FunFam" id="3.30.160.60:FF:000362">
    <property type="entry name" value="Zinc finger protein 606"/>
    <property type="match status" value="1"/>
</dbReference>
<dbReference type="FunFam" id="3.30.160.60:FF:002679">
    <property type="entry name" value="Zinc finger protein 726"/>
    <property type="match status" value="1"/>
</dbReference>
<dbReference type="FunFam" id="3.30.160.60:FF:002357">
    <property type="entry name" value="Zinc finger protein 782"/>
    <property type="match status" value="1"/>
</dbReference>
<dbReference type="Gene3D" id="6.10.140.140">
    <property type="match status" value="1"/>
</dbReference>
<dbReference type="Gene3D" id="3.30.160.60">
    <property type="entry name" value="Classic Zinc Finger"/>
    <property type="match status" value="11"/>
</dbReference>
<dbReference type="InterPro" id="IPR001909">
    <property type="entry name" value="KRAB"/>
</dbReference>
<dbReference type="InterPro" id="IPR036051">
    <property type="entry name" value="KRAB_dom_sf"/>
</dbReference>
<dbReference type="InterPro" id="IPR036236">
    <property type="entry name" value="Znf_C2H2_sf"/>
</dbReference>
<dbReference type="InterPro" id="IPR013087">
    <property type="entry name" value="Znf_C2H2_type"/>
</dbReference>
<dbReference type="PANTHER" id="PTHR24390">
    <property type="entry name" value="ZINC FINGER PROTEIN"/>
    <property type="match status" value="1"/>
</dbReference>
<dbReference type="PANTHER" id="PTHR24390:SF265">
    <property type="entry name" value="ZINC FINGER PROTEIN 239-LIKE-RELATED"/>
    <property type="match status" value="1"/>
</dbReference>
<dbReference type="Pfam" id="PF01352">
    <property type="entry name" value="KRAB"/>
    <property type="match status" value="1"/>
</dbReference>
<dbReference type="Pfam" id="PF00096">
    <property type="entry name" value="zf-C2H2"/>
    <property type="match status" value="8"/>
</dbReference>
<dbReference type="Pfam" id="PF13912">
    <property type="entry name" value="zf-C2H2_6"/>
    <property type="match status" value="1"/>
</dbReference>
<dbReference type="SMART" id="SM00349">
    <property type="entry name" value="KRAB"/>
    <property type="match status" value="1"/>
</dbReference>
<dbReference type="SMART" id="SM00355">
    <property type="entry name" value="ZnF_C2H2"/>
    <property type="match status" value="11"/>
</dbReference>
<dbReference type="SUPFAM" id="SSF57667">
    <property type="entry name" value="beta-beta-alpha zinc fingers"/>
    <property type="match status" value="6"/>
</dbReference>
<dbReference type="SUPFAM" id="SSF109640">
    <property type="entry name" value="KRAB domain (Kruppel-associated box)"/>
    <property type="match status" value="1"/>
</dbReference>
<dbReference type="PROSITE" id="PS50805">
    <property type="entry name" value="KRAB"/>
    <property type="match status" value="1"/>
</dbReference>
<dbReference type="PROSITE" id="PS00028">
    <property type="entry name" value="ZINC_FINGER_C2H2_1"/>
    <property type="match status" value="10"/>
</dbReference>
<dbReference type="PROSITE" id="PS50157">
    <property type="entry name" value="ZINC_FINGER_C2H2_2"/>
    <property type="match status" value="11"/>
</dbReference>
<evidence type="ECO:0000255" key="1">
    <source>
        <dbReference type="PROSITE-ProRule" id="PRU00042"/>
    </source>
</evidence>
<evidence type="ECO:0000255" key="2">
    <source>
        <dbReference type="PROSITE-ProRule" id="PRU00119"/>
    </source>
</evidence>
<evidence type="ECO:0000269" key="3">
    <source>
    </source>
</evidence>
<evidence type="ECO:0000305" key="4"/>
<gene>
    <name type="primary">ZNF141</name>
    <name type="synonym">D4S90</name>
</gene>
<comment type="function">
    <text evidence="3">May be involved in transcriptional regulation as a repressor. Plays a role in limb development.</text>
</comment>
<comment type="subcellular location">
    <subcellularLocation>
        <location evidence="4">Nucleus</location>
    </subcellularLocation>
</comment>
<comment type="tissue specificity">
    <text>Ubiquitously low expression.</text>
</comment>
<comment type="disease" evidence="3">
    <disease id="DI-03746">
        <name>Polydactyly, postaxial A6</name>
        <acronym>PAPA6</acronym>
        <description>A condition characterized by the occurrence of supernumerary digits in the upper and/or lower extremities. In postaxial polydactyly type A, the extra digit is well-formed and articulates with the fifth or a sixth metacarpal/metatarsal.</description>
        <dbReference type="MIM" id="615226"/>
    </disease>
    <text>The disease is caused by variants affecting the gene represented in this entry.</text>
</comment>
<comment type="similarity">
    <text evidence="4">Belongs to the krueppel C2H2-type zinc-finger protein family.</text>
</comment>